<reference key="1">
    <citation type="journal article" date="1991" name="Virology">
        <title>A bluetongue serogroup-reactive epitope in the amino terminal half of the major core protein VP7 is accessible on the surface of bluetongue virus particles.</title>
        <authorList>
            <person name="Eaton B.T."/>
            <person name="Gould A.R."/>
            <person name="Hyatt A.D."/>
            <person name="Coupar B.E.H."/>
            <person name="Martyn J.C."/>
            <person name="White J.R."/>
        </authorList>
    </citation>
    <scope>NUCLEOTIDE SEQUENCE [GENOMIC RNA]</scope>
</reference>
<gene>
    <name type="primary">Segment-7</name>
</gene>
<evidence type="ECO:0000255" key="1"/>
<evidence type="ECO:0000305" key="2"/>
<dbReference type="EMBL" id="M63417">
    <property type="protein sequence ID" value="AAA42850.1"/>
    <property type="molecule type" value="Genomic_RNA"/>
</dbReference>
<dbReference type="PIR" id="A38551">
    <property type="entry name" value="P7XRB1"/>
</dbReference>
<dbReference type="SMR" id="P26560"/>
<dbReference type="GlyCosmos" id="P26560">
    <property type="glycosylation" value="1 site, No reported glycans"/>
</dbReference>
<dbReference type="GO" id="GO:0019031">
    <property type="term" value="C:viral envelope"/>
    <property type="evidence" value="ECO:0007669"/>
    <property type="project" value="InterPro"/>
</dbReference>
<dbReference type="GO" id="GO:0039624">
    <property type="term" value="C:viral outer capsid"/>
    <property type="evidence" value="ECO:0007669"/>
    <property type="project" value="UniProtKB-KW"/>
</dbReference>
<dbReference type="GO" id="GO:0046789">
    <property type="term" value="F:host cell surface receptor binding"/>
    <property type="evidence" value="ECO:0007669"/>
    <property type="project" value="InterPro"/>
</dbReference>
<dbReference type="GO" id="GO:0005198">
    <property type="term" value="F:structural molecule activity"/>
    <property type="evidence" value="ECO:0007669"/>
    <property type="project" value="InterPro"/>
</dbReference>
<dbReference type="GO" id="GO:0019064">
    <property type="term" value="P:fusion of virus membrane with host plasma membrane"/>
    <property type="evidence" value="ECO:0007669"/>
    <property type="project" value="InterPro"/>
</dbReference>
<dbReference type="Gene3D" id="2.60.120.170">
    <property type="match status" value="1"/>
</dbReference>
<dbReference type="Gene3D" id="1.10.250.10">
    <property type="entry name" value="Bluetongue Virus 10, subunit 1, domain 1"/>
    <property type="match status" value="1"/>
</dbReference>
<dbReference type="Gene3D" id="1.10.170.10">
    <property type="entry name" value="Bluetongue Virus 10, subunit 1, domain 3"/>
    <property type="match status" value="1"/>
</dbReference>
<dbReference type="InterPro" id="IPR008980">
    <property type="entry name" value="Capsid_hemagglutn"/>
</dbReference>
<dbReference type="InterPro" id="IPR001803">
    <property type="entry name" value="Orbi_VP7_capsid"/>
</dbReference>
<dbReference type="InterPro" id="IPR023178">
    <property type="entry name" value="Orbi_VP7_capsid_C"/>
</dbReference>
<dbReference type="InterPro" id="IPR023176">
    <property type="entry name" value="Orbi_VP7_capsid_N"/>
</dbReference>
<dbReference type="InterPro" id="IPR008935">
    <property type="entry name" value="Virus_capsid_a-hlx_vir"/>
</dbReference>
<dbReference type="Pfam" id="PF00897">
    <property type="entry name" value="Orbi_VP7"/>
    <property type="match status" value="1"/>
</dbReference>
<dbReference type="PRINTS" id="PR00903">
    <property type="entry name" value="VP7CAPSID"/>
</dbReference>
<dbReference type="SUPFAM" id="SSF48345">
    <property type="entry name" value="A virus capsid protein alpha-helical domain"/>
    <property type="match status" value="1"/>
</dbReference>
<dbReference type="SUPFAM" id="SSF49818">
    <property type="entry name" value="Viral protein domain"/>
    <property type="match status" value="1"/>
</dbReference>
<organism>
    <name type="scientific">Bluetongue virus 1 (isolate Australia)</name>
    <name type="common">BTV 1</name>
    <dbReference type="NCBI Taxonomy" id="10904"/>
    <lineage>
        <taxon>Viruses</taxon>
        <taxon>Riboviria</taxon>
        <taxon>Orthornavirae</taxon>
        <taxon>Duplornaviricota</taxon>
        <taxon>Resentoviricetes</taxon>
        <taxon>Reovirales</taxon>
        <taxon>Sedoreoviridae</taxon>
        <taxon>Orbivirus</taxon>
        <taxon>Bluetongue virus</taxon>
    </lineage>
</organism>
<accession>P26560</accession>
<proteinExistence type="inferred from homology"/>
<organismHost>
    <name type="scientific">Antilocapra americana</name>
    <name type="common">Pronghorn</name>
    <dbReference type="NCBI Taxonomy" id="9891"/>
</organismHost>
<organismHost>
    <name type="scientific">Bos taurus</name>
    <name type="common">Bovine</name>
    <dbReference type="NCBI Taxonomy" id="9913"/>
</organismHost>
<organismHost>
    <name type="scientific">Capra hircus</name>
    <name type="common">Goat</name>
    <dbReference type="NCBI Taxonomy" id="9925"/>
</organismHost>
<organismHost>
    <name type="scientific">Culicoides variipennis</name>
    <name type="common">Biting midge</name>
    <dbReference type="NCBI Taxonomy" id="46212"/>
</organismHost>
<organismHost>
    <name type="scientific">Ovis aries</name>
    <name type="common">Sheep</name>
    <dbReference type="NCBI Taxonomy" id="9940"/>
</organismHost>
<sequence length="349" mass="38531">MDTIAARALTVMRACATLQEARIVLEANVMEILGIAINRYNGLTLRGVTMRPTSLAQRNEMFFMCLDMMLSAAGINVGPISPDYTQHMATIGVLATPEIPFTTEAANEIARVTGETSTWGPARQPYGFFLETEETYQPGRWFMRAAQAVTAVVCGPDMIQVSLNAGARGDVQQIFQGRNDPMMIYLVWRRIENFAMAQGNSQQTLAGVTVSVGGVDMRAGRIIAWDGQAALQIHNPTQQNAMVQIQVVFYISMDKTLNQYPALTAEIFNVYSFRDHTWHGLRTAILNRTTLPNMLPPIFPPNDRDSILTLLLLSTLADVYTVLRPEFAIHGVNPMSGPLTRATARAAYV</sequence>
<feature type="chain" id="PRO_0000222729" description="Core protein VP7">
    <location>
        <begin position="1"/>
        <end position="349"/>
    </location>
</feature>
<feature type="glycosylation site" description="N-linked (GlcNAc...) asparagine; by host" evidence="1">
    <location>
        <position position="287"/>
    </location>
</feature>
<protein>
    <recommendedName>
        <fullName>Core protein VP7</fullName>
    </recommendedName>
</protein>
<comment type="function">
    <text>The VP7 protein is one of the five proteins (with VP1, VP3, VP4, and VP6) which form the inner capsid of the virus.</text>
</comment>
<comment type="subunit">
    <text>Homotrimer that assemble in a complex of 260 capsomers on an inner scaffold composed of VP3.</text>
</comment>
<comment type="subcellular location">
    <subcellularLocation>
        <location evidence="2">Virion</location>
    </subcellularLocation>
</comment>
<comment type="similarity">
    <text evidence="2">Belongs to the orbivirus VP7 family.</text>
</comment>
<keyword id="KW-0167">Capsid protein</keyword>
<keyword id="KW-0325">Glycoprotein</keyword>
<keyword id="KW-1152">Outer capsid protein</keyword>
<keyword id="KW-0946">Virion</keyword>
<name>VP7_BTV1A</name>